<sequence length="110" mass="13019">MEMTLFLNESYIFHRLRMWSIVLWHSCVFVCAECGNANYRVPRCLIKPFSVPVTFPFSVKKNIRILDLDPRTEAYCLSPYSVCSKRLPCKKYFYLLNSYNIKRVLGVVYC</sequence>
<organism>
    <name type="scientific">Saccharomyces cerevisiae (strain ATCC 204508 / S288c)</name>
    <name type="common">Baker's yeast</name>
    <dbReference type="NCBI Taxonomy" id="559292"/>
    <lineage>
        <taxon>Eukaryota</taxon>
        <taxon>Fungi</taxon>
        <taxon>Dikarya</taxon>
        <taxon>Ascomycota</taxon>
        <taxon>Saccharomycotina</taxon>
        <taxon>Saccharomycetes</taxon>
        <taxon>Saccharomycetales</taxon>
        <taxon>Saccharomycetaceae</taxon>
        <taxon>Saccharomyces</taxon>
    </lineage>
</organism>
<protein>
    <recommendedName>
        <fullName>Putative UPF0377 protein YIR040C</fullName>
    </recommendedName>
</protein>
<name>YIW0_YEAST</name>
<evidence type="ECO:0000305" key="1"/>
<evidence type="ECO:0000305" key="2">
    <source>
    </source>
</evidence>
<feature type="chain" id="PRO_0000203008" description="Putative UPF0377 protein YIR040C">
    <location>
        <begin position="1"/>
        <end position="110"/>
    </location>
</feature>
<accession>P40584</accession>
<comment type="similarity">
    <text evidence="1">Belongs to the UPF0377 family.</text>
</comment>
<comment type="caution">
    <text evidence="2">Product of a dubious gene prediction unlikely to encode a functional protein. Because of that it is not part of the S.cerevisiae S288c complete/reference proteome set.</text>
</comment>
<dbReference type="EMBL" id="Z46902">
    <property type="protein sequence ID" value="CAA86999.1"/>
    <property type="molecule type" value="Genomic_DNA"/>
</dbReference>
<dbReference type="PIR" id="S50345">
    <property type="entry name" value="S50345"/>
</dbReference>
<dbReference type="DIP" id="DIP-4386N"/>
<dbReference type="STRING" id="4932.YIR040C"/>
<dbReference type="PaxDb" id="4932-YIR040C"/>
<dbReference type="EnsemblFungi" id="YIR040C_mRNA">
    <property type="protein sequence ID" value="YIR040C"/>
    <property type="gene ID" value="YIR040C"/>
</dbReference>
<dbReference type="AGR" id="SGD:S000001479"/>
<dbReference type="SGD" id="S000001479">
    <property type="gene designation" value="YIR040C"/>
</dbReference>
<dbReference type="GeneTree" id="ENSGT00940000177730"/>
<dbReference type="HOGENOM" id="CLU_173518_0_0_1"/>
<proteinExistence type="uncertain"/>
<gene>
    <name type="ordered locus">YIR040C</name>
</gene>
<reference key="1">
    <citation type="journal article" date="1997" name="Nature">
        <title>The nucleotide sequence of Saccharomyces cerevisiae chromosome IX.</title>
        <authorList>
            <person name="Churcher C.M."/>
            <person name="Bowman S."/>
            <person name="Badcock K."/>
            <person name="Bankier A.T."/>
            <person name="Brown D."/>
            <person name="Chillingworth T."/>
            <person name="Connor R."/>
            <person name="Devlin K."/>
            <person name="Gentles S."/>
            <person name="Hamlin N."/>
            <person name="Harris D.E."/>
            <person name="Horsnell T."/>
            <person name="Hunt S."/>
            <person name="Jagels K."/>
            <person name="Jones M."/>
            <person name="Lye G."/>
            <person name="Moule S."/>
            <person name="Odell C."/>
            <person name="Pearson D."/>
            <person name="Rajandream M.A."/>
            <person name="Rice P."/>
            <person name="Rowley N."/>
            <person name="Skelton J."/>
            <person name="Smith V."/>
            <person name="Walsh S.V."/>
            <person name="Whitehead S."/>
            <person name="Barrell B.G."/>
        </authorList>
    </citation>
    <scope>NUCLEOTIDE SEQUENCE [LARGE SCALE GENOMIC DNA]</scope>
    <source>
        <strain>ATCC 204508 / S288c</strain>
    </source>
</reference>
<reference key="2">
    <citation type="journal article" date="2014" name="G3 (Bethesda)">
        <title>The reference genome sequence of Saccharomyces cerevisiae: Then and now.</title>
        <authorList>
            <person name="Engel S.R."/>
            <person name="Dietrich F.S."/>
            <person name="Fisk D.G."/>
            <person name="Binkley G."/>
            <person name="Balakrishnan R."/>
            <person name="Costanzo M.C."/>
            <person name="Dwight S.S."/>
            <person name="Hitz B.C."/>
            <person name="Karra K."/>
            <person name="Nash R.S."/>
            <person name="Weng S."/>
            <person name="Wong E.D."/>
            <person name="Lloyd P."/>
            <person name="Skrzypek M.S."/>
            <person name="Miyasato S.R."/>
            <person name="Simison M."/>
            <person name="Cherry J.M."/>
        </authorList>
    </citation>
    <scope>GENOME REANNOTATION</scope>
    <source>
        <strain>ATCC 204508 / S288c</strain>
    </source>
</reference>